<keyword id="KW-0687">Ribonucleoprotein</keyword>
<keyword id="KW-0689">Ribosomal protein</keyword>
<keyword id="KW-0694">RNA-binding</keyword>
<keyword id="KW-0699">rRNA-binding</keyword>
<gene>
    <name evidence="1" type="primary">rplU</name>
    <name type="ordered locus">Dvul_2058</name>
</gene>
<organism>
    <name type="scientific">Nitratidesulfovibrio vulgaris (strain DP4)</name>
    <name type="common">Desulfovibrio vulgaris</name>
    <dbReference type="NCBI Taxonomy" id="391774"/>
    <lineage>
        <taxon>Bacteria</taxon>
        <taxon>Pseudomonadati</taxon>
        <taxon>Thermodesulfobacteriota</taxon>
        <taxon>Desulfovibrionia</taxon>
        <taxon>Desulfovibrionales</taxon>
        <taxon>Desulfovibrionaceae</taxon>
        <taxon>Nitratidesulfovibrio</taxon>
    </lineage>
</organism>
<name>RL21_NITV4</name>
<dbReference type="EMBL" id="CP000527">
    <property type="protein sequence ID" value="ABM29074.1"/>
    <property type="molecule type" value="Genomic_DNA"/>
</dbReference>
<dbReference type="RefSeq" id="WP_010938226.1">
    <property type="nucleotide sequence ID" value="NC_008751.1"/>
</dbReference>
<dbReference type="SMR" id="A1VF58"/>
<dbReference type="KEGG" id="dvl:Dvul_2058"/>
<dbReference type="HOGENOM" id="CLU_061463_3_2_7"/>
<dbReference type="Proteomes" id="UP000009173">
    <property type="component" value="Chromosome"/>
</dbReference>
<dbReference type="GO" id="GO:0005737">
    <property type="term" value="C:cytoplasm"/>
    <property type="evidence" value="ECO:0007669"/>
    <property type="project" value="UniProtKB-ARBA"/>
</dbReference>
<dbReference type="GO" id="GO:1990904">
    <property type="term" value="C:ribonucleoprotein complex"/>
    <property type="evidence" value="ECO:0007669"/>
    <property type="project" value="UniProtKB-KW"/>
</dbReference>
<dbReference type="GO" id="GO:0005840">
    <property type="term" value="C:ribosome"/>
    <property type="evidence" value="ECO:0007669"/>
    <property type="project" value="UniProtKB-KW"/>
</dbReference>
<dbReference type="GO" id="GO:0019843">
    <property type="term" value="F:rRNA binding"/>
    <property type="evidence" value="ECO:0007669"/>
    <property type="project" value="UniProtKB-UniRule"/>
</dbReference>
<dbReference type="GO" id="GO:0003735">
    <property type="term" value="F:structural constituent of ribosome"/>
    <property type="evidence" value="ECO:0007669"/>
    <property type="project" value="InterPro"/>
</dbReference>
<dbReference type="GO" id="GO:0006412">
    <property type="term" value="P:translation"/>
    <property type="evidence" value="ECO:0007669"/>
    <property type="project" value="UniProtKB-UniRule"/>
</dbReference>
<dbReference type="HAMAP" id="MF_01363">
    <property type="entry name" value="Ribosomal_bL21"/>
    <property type="match status" value="1"/>
</dbReference>
<dbReference type="InterPro" id="IPR028909">
    <property type="entry name" value="bL21-like"/>
</dbReference>
<dbReference type="InterPro" id="IPR036164">
    <property type="entry name" value="bL21-like_sf"/>
</dbReference>
<dbReference type="InterPro" id="IPR001787">
    <property type="entry name" value="Ribosomal_bL21"/>
</dbReference>
<dbReference type="NCBIfam" id="TIGR00061">
    <property type="entry name" value="L21"/>
    <property type="match status" value="1"/>
</dbReference>
<dbReference type="PANTHER" id="PTHR21349">
    <property type="entry name" value="50S RIBOSOMAL PROTEIN L21"/>
    <property type="match status" value="1"/>
</dbReference>
<dbReference type="PANTHER" id="PTHR21349:SF0">
    <property type="entry name" value="LARGE RIBOSOMAL SUBUNIT PROTEIN BL21M"/>
    <property type="match status" value="1"/>
</dbReference>
<dbReference type="Pfam" id="PF00829">
    <property type="entry name" value="Ribosomal_L21p"/>
    <property type="match status" value="1"/>
</dbReference>
<dbReference type="SUPFAM" id="SSF141091">
    <property type="entry name" value="L21p-like"/>
    <property type="match status" value="1"/>
</dbReference>
<evidence type="ECO:0000255" key="1">
    <source>
        <dbReference type="HAMAP-Rule" id="MF_01363"/>
    </source>
</evidence>
<evidence type="ECO:0000305" key="2"/>
<proteinExistence type="inferred from homology"/>
<reference key="1">
    <citation type="journal article" date="2009" name="Environ. Microbiol.">
        <title>Contribution of mobile genetic elements to Desulfovibrio vulgaris genome plasticity.</title>
        <authorList>
            <person name="Walker C.B."/>
            <person name="Stolyar S."/>
            <person name="Chivian D."/>
            <person name="Pinel N."/>
            <person name="Gabster J.A."/>
            <person name="Dehal P.S."/>
            <person name="He Z."/>
            <person name="Yang Z.K."/>
            <person name="Yen H.C."/>
            <person name="Zhou J."/>
            <person name="Wall J.D."/>
            <person name="Hazen T.C."/>
            <person name="Arkin A.P."/>
            <person name="Stahl D.A."/>
        </authorList>
    </citation>
    <scope>NUCLEOTIDE SEQUENCE [LARGE SCALE GENOMIC DNA]</scope>
    <source>
        <strain>DP4</strain>
    </source>
</reference>
<sequence>MYAIIETGGKQFRVEEGSKIFVEKLASEAGSEIVIDKVLMLGGGDVKVGAPYVENAKVTAEVVEHGRGEKVVIFKKWRRNDSRKKQGHRQDFTALKIKAITA</sequence>
<feature type="chain" id="PRO_1000067829" description="Large ribosomal subunit protein bL21">
    <location>
        <begin position="1"/>
        <end position="102"/>
    </location>
</feature>
<comment type="function">
    <text evidence="1">This protein binds to 23S rRNA in the presence of protein L20.</text>
</comment>
<comment type="subunit">
    <text evidence="1">Part of the 50S ribosomal subunit. Contacts protein L20.</text>
</comment>
<comment type="similarity">
    <text evidence="1">Belongs to the bacterial ribosomal protein bL21 family.</text>
</comment>
<protein>
    <recommendedName>
        <fullName evidence="1">Large ribosomal subunit protein bL21</fullName>
    </recommendedName>
    <alternativeName>
        <fullName evidence="2">50S ribosomal protein L21</fullName>
    </alternativeName>
</protein>
<accession>A1VF58</accession>